<comment type="function">
    <text evidence="1">Required for small ribosomal subunit (SSU) synthesis. Has a role in the processing of early nucleolar and late cytoplasmic pre-RNA species.</text>
</comment>
<comment type="subunit">
    <text evidence="1">Component of the small ribosomal subunit, ribosomal RNA processing complex (SSU RRP complex).</text>
</comment>
<comment type="subcellular location">
    <subcellularLocation>
        <location evidence="1">Cytoplasm</location>
    </subcellularLocation>
    <subcellularLocation>
        <location evidence="1">Nucleus</location>
        <location evidence="1">Nucleolus</location>
    </subcellularLocation>
</comment>
<comment type="similarity">
    <text evidence="3">Belongs to the PNO1 family.</text>
</comment>
<comment type="sequence caution" evidence="3">
    <conflict type="erroneous gene model prediction">
        <sequence resource="EMBL-CDS" id="EGS21208"/>
    </conflict>
</comment>
<sequence length="259" mass="28677">MPAPTALKQPPPAPEQQAAPAITNENEDELLIDIQQAAATLTDPNAAEPPEETMENEMAVDEEGRPRFAPGKNIDPIRRIETRKIPIPPHRMSALKANWTKYPPLVDHCKLQVRMNIKEKRVELRSSKYTVSNEALQMGADFVSAFAMGFDIDDAIALLRLDSLYIQSFDIKDVRQTLGPDALSRAIGRIAGKDGKTKFAIENATKTRIVLAGSKVHILGAFENIGMARESIVSLVLGAQPGKVYNNLRIIASRMKERW</sequence>
<protein>
    <recommendedName>
        <fullName>Pre-rRNA-processing protein PNO1</fullName>
    </recommendedName>
</protein>
<accession>G0S3T2</accession>
<dbReference type="EMBL" id="GL988041">
    <property type="protein sequence ID" value="EGS21208.1"/>
    <property type="status" value="ALT_SEQ"/>
    <property type="molecule type" value="Genomic_DNA"/>
</dbReference>
<dbReference type="RefSeq" id="XP_006693504.1">
    <property type="nucleotide sequence ID" value="XM_006693441.1"/>
</dbReference>
<dbReference type="PDB" id="5OQL">
    <property type="method" value="EM"/>
    <property type="resolution" value="3.20 A"/>
    <property type="chains" value="h=1-259"/>
</dbReference>
<dbReference type="PDB" id="6RXT">
    <property type="method" value="EM"/>
    <property type="resolution" value="7.00 A"/>
    <property type="chains" value="CQ=1-259"/>
</dbReference>
<dbReference type="PDB" id="6RXU">
    <property type="method" value="EM"/>
    <property type="resolution" value="3.50 A"/>
    <property type="chains" value="CQ=1-259"/>
</dbReference>
<dbReference type="PDB" id="6RXV">
    <property type="method" value="EM"/>
    <property type="resolution" value="4.00 A"/>
    <property type="chains" value="CQ=1-259"/>
</dbReference>
<dbReference type="PDB" id="6RXX">
    <property type="method" value="EM"/>
    <property type="resolution" value="7.10 A"/>
    <property type="chains" value="CQ=1-259"/>
</dbReference>
<dbReference type="PDB" id="6RXY">
    <property type="method" value="EM"/>
    <property type="resolution" value="4.70 A"/>
    <property type="chains" value="CQ=1-259"/>
</dbReference>
<dbReference type="PDB" id="6RXZ">
    <property type="method" value="EM"/>
    <property type="resolution" value="4.40 A"/>
    <property type="chains" value="CQ=1-259"/>
</dbReference>
<dbReference type="PDBsum" id="5OQL"/>
<dbReference type="PDBsum" id="6RXT"/>
<dbReference type="PDBsum" id="6RXU"/>
<dbReference type="PDBsum" id="6RXV"/>
<dbReference type="PDBsum" id="6RXX"/>
<dbReference type="PDBsum" id="6RXY"/>
<dbReference type="PDBsum" id="6RXZ"/>
<dbReference type="EMDB" id="EMD-10051"/>
<dbReference type="EMDB" id="EMD-10052"/>
<dbReference type="EMDB" id="EMD-10053"/>
<dbReference type="EMDB" id="EMD-10054"/>
<dbReference type="EMDB" id="EMD-10055"/>
<dbReference type="EMDB" id="EMD-10056"/>
<dbReference type="EMDB" id="EMD-3847"/>
<dbReference type="SMR" id="G0S3T2"/>
<dbReference type="IntAct" id="G0S3T2">
    <property type="interactions" value="1"/>
</dbReference>
<dbReference type="STRING" id="759272.G0S3T2"/>
<dbReference type="GeneID" id="18257092"/>
<dbReference type="KEGG" id="cthr:CTHT_0030540"/>
<dbReference type="eggNOG" id="KOG3273">
    <property type="taxonomic scope" value="Eukaryota"/>
</dbReference>
<dbReference type="HOGENOM" id="CLU_064992_0_2_1"/>
<dbReference type="OrthoDB" id="1932641at2759"/>
<dbReference type="Proteomes" id="UP000008066">
    <property type="component" value="Unassembled WGS sequence"/>
</dbReference>
<dbReference type="GO" id="GO:0005737">
    <property type="term" value="C:cytoplasm"/>
    <property type="evidence" value="ECO:0007669"/>
    <property type="project" value="UniProtKB-SubCell"/>
</dbReference>
<dbReference type="GO" id="GO:0005730">
    <property type="term" value="C:nucleolus"/>
    <property type="evidence" value="ECO:0007669"/>
    <property type="project" value="UniProtKB-SubCell"/>
</dbReference>
<dbReference type="GO" id="GO:0003723">
    <property type="term" value="F:RNA binding"/>
    <property type="evidence" value="ECO:0007669"/>
    <property type="project" value="UniProtKB-KW"/>
</dbReference>
<dbReference type="GO" id="GO:0042254">
    <property type="term" value="P:ribosome biogenesis"/>
    <property type="evidence" value="ECO:0007669"/>
    <property type="project" value="UniProtKB-KW"/>
</dbReference>
<dbReference type="CDD" id="cd22391">
    <property type="entry name" value="KH-I_PNO1_rpt1"/>
    <property type="match status" value="1"/>
</dbReference>
<dbReference type="CDD" id="cd22392">
    <property type="entry name" value="KH-I_PNO1_rpt2"/>
    <property type="match status" value="1"/>
</dbReference>
<dbReference type="FunFam" id="3.30.1370.10:FF:000009">
    <property type="entry name" value="RNA-binding protein PNO1"/>
    <property type="match status" value="1"/>
</dbReference>
<dbReference type="Gene3D" id="3.30.1370.10">
    <property type="entry name" value="K Homology domain, type 1"/>
    <property type="match status" value="1"/>
</dbReference>
<dbReference type="InterPro" id="IPR055212">
    <property type="entry name" value="KH-I_PNO1_first"/>
</dbReference>
<dbReference type="InterPro" id="IPR004087">
    <property type="entry name" value="KH_dom"/>
</dbReference>
<dbReference type="InterPro" id="IPR036612">
    <property type="entry name" value="KH_dom_type_1_sf"/>
</dbReference>
<dbReference type="InterPro" id="IPR055211">
    <property type="entry name" value="KH_PNO1_2nd"/>
</dbReference>
<dbReference type="PANTHER" id="PTHR12826">
    <property type="entry name" value="RIBONUCLEASE Y"/>
    <property type="match status" value="1"/>
</dbReference>
<dbReference type="PANTHER" id="PTHR12826:SF13">
    <property type="entry name" value="RNA-BINDING PROTEIN PNO1"/>
    <property type="match status" value="1"/>
</dbReference>
<dbReference type="Pfam" id="PF22891">
    <property type="entry name" value="KH_PNO1_2nd"/>
    <property type="match status" value="1"/>
</dbReference>
<dbReference type="SMART" id="SM00322">
    <property type="entry name" value="KH"/>
    <property type="match status" value="1"/>
</dbReference>
<dbReference type="SUPFAM" id="SSF54791">
    <property type="entry name" value="Eukaryotic type KH-domain (KH-domain type I)"/>
    <property type="match status" value="1"/>
</dbReference>
<evidence type="ECO:0000250" key="1">
    <source>
        <dbReference type="UniProtKB" id="Q99216"/>
    </source>
</evidence>
<evidence type="ECO:0000256" key="2">
    <source>
        <dbReference type="SAM" id="MobiDB-lite"/>
    </source>
</evidence>
<evidence type="ECO:0000305" key="3"/>
<name>PNO1_CHATD</name>
<organism>
    <name type="scientific">Chaetomium thermophilum (strain DSM 1495 / CBS 144.50 / IMI 039719)</name>
    <name type="common">Thermochaetoides thermophila</name>
    <dbReference type="NCBI Taxonomy" id="759272"/>
    <lineage>
        <taxon>Eukaryota</taxon>
        <taxon>Fungi</taxon>
        <taxon>Dikarya</taxon>
        <taxon>Ascomycota</taxon>
        <taxon>Pezizomycotina</taxon>
        <taxon>Sordariomycetes</taxon>
        <taxon>Sordariomycetidae</taxon>
        <taxon>Sordariales</taxon>
        <taxon>Chaetomiaceae</taxon>
        <taxon>Thermochaetoides</taxon>
    </lineage>
</organism>
<proteinExistence type="evidence at protein level"/>
<reference key="1">
    <citation type="journal article" date="2011" name="Cell">
        <title>Insight into structure and assembly of the nuclear pore complex by utilizing the genome of a eukaryotic thermophile.</title>
        <authorList>
            <person name="Amlacher S."/>
            <person name="Sarges P."/>
            <person name="Flemming D."/>
            <person name="van Noort V."/>
            <person name="Kunze R."/>
            <person name="Devos D.P."/>
            <person name="Arumugam M."/>
            <person name="Bork P."/>
            <person name="Hurt E."/>
        </authorList>
    </citation>
    <scope>NUCLEOTIDE SEQUENCE [LARGE SCALE GENOMIC DNA]</scope>
    <source>
        <strain>DSM 1495 / CBS 144.50 / IMI 039719</strain>
    </source>
</reference>
<keyword id="KW-0002">3D-structure</keyword>
<keyword id="KW-0963">Cytoplasm</keyword>
<keyword id="KW-0539">Nucleus</keyword>
<keyword id="KW-1185">Reference proteome</keyword>
<keyword id="KW-0690">Ribosome biogenesis</keyword>
<keyword id="KW-0694">RNA-binding</keyword>
<feature type="chain" id="PRO_0000435810" description="Pre-rRNA-processing protein PNO1">
    <location>
        <begin position="1"/>
        <end position="259"/>
    </location>
</feature>
<feature type="domain" description="KH" evidence="3">
    <location>
        <begin position="180"/>
        <end position="232"/>
    </location>
</feature>
<feature type="region of interest" description="Disordered" evidence="2">
    <location>
        <begin position="1"/>
        <end position="25"/>
    </location>
</feature>
<feature type="region of interest" description="Disordered" evidence="2">
    <location>
        <begin position="37"/>
        <end position="74"/>
    </location>
</feature>
<feature type="compositionally biased region" description="Pro residues" evidence="2">
    <location>
        <begin position="1"/>
        <end position="14"/>
    </location>
</feature>
<feature type="compositionally biased region" description="Acidic residues" evidence="2">
    <location>
        <begin position="49"/>
        <end position="61"/>
    </location>
</feature>
<gene>
    <name type="primary">PNO1</name>
    <name type="synonym">DIM2</name>
    <name type="ORF">CTHT_0030540</name>
</gene>